<protein>
    <recommendedName>
        <fullName>Gamma-tubulin complex component 4 homolog</fullName>
    </recommendedName>
    <alternativeName>
        <fullName>Gamma-ring complex protein 75 kDa</fullName>
        <shortName>d75p</shortName>
        <shortName>dGrip75</shortName>
    </alternativeName>
</protein>
<name>GCP4_DROME</name>
<keyword id="KW-0963">Cytoplasm</keyword>
<keyword id="KW-0206">Cytoskeleton</keyword>
<keyword id="KW-0493">Microtubule</keyword>
<keyword id="KW-0597">Phosphoprotein</keyword>
<keyword id="KW-1185">Reference proteome</keyword>
<dbReference type="EMBL" id="AE014134">
    <property type="protein sequence ID" value="AAF52962.2"/>
    <property type="molecule type" value="Genomic_DNA"/>
</dbReference>
<dbReference type="EMBL" id="AJ249678">
    <property type="protein sequence ID" value="CAB62508.1"/>
    <property type="molecule type" value="mRNA"/>
</dbReference>
<dbReference type="RefSeq" id="NP_609412.1">
    <property type="nucleotide sequence ID" value="NM_135568.4"/>
</dbReference>
<dbReference type="SMR" id="Q9VKU7"/>
<dbReference type="BioGRID" id="60521">
    <property type="interactions" value="9"/>
</dbReference>
<dbReference type="ComplexPortal" id="CPX-2801">
    <property type="entry name" value="Gamma-tubulin ring complex"/>
</dbReference>
<dbReference type="FunCoup" id="Q9VKU7">
    <property type="interactions" value="1577"/>
</dbReference>
<dbReference type="IntAct" id="Q9VKU7">
    <property type="interactions" value="7"/>
</dbReference>
<dbReference type="MINT" id="Q9VKU7"/>
<dbReference type="STRING" id="7227.FBpp0079623"/>
<dbReference type="iPTMnet" id="Q9VKU7"/>
<dbReference type="PaxDb" id="7227-FBpp0079623"/>
<dbReference type="DNASU" id="34441"/>
<dbReference type="EnsemblMetazoa" id="FBtr0080033">
    <property type="protein sequence ID" value="FBpp0079623"/>
    <property type="gene ID" value="FBgn0026431"/>
</dbReference>
<dbReference type="GeneID" id="34441"/>
<dbReference type="KEGG" id="dme:Dmel_CG6176"/>
<dbReference type="UCSC" id="CG6176-RA">
    <property type="organism name" value="d. melanogaster"/>
</dbReference>
<dbReference type="AGR" id="FB:FBgn0026431"/>
<dbReference type="CTD" id="34441"/>
<dbReference type="FlyBase" id="FBgn0026431">
    <property type="gene designation" value="Grip75"/>
</dbReference>
<dbReference type="VEuPathDB" id="VectorBase:FBgn0026431"/>
<dbReference type="eggNOG" id="KOG2065">
    <property type="taxonomic scope" value="Eukaryota"/>
</dbReference>
<dbReference type="HOGENOM" id="CLU_012029_0_0_1"/>
<dbReference type="InParanoid" id="Q9VKU7"/>
<dbReference type="OMA" id="QLSMWLL"/>
<dbReference type="OrthoDB" id="78652at2759"/>
<dbReference type="PhylomeDB" id="Q9VKU7"/>
<dbReference type="BioGRID-ORCS" id="34441">
    <property type="hits" value="1 hit in 1 CRISPR screen"/>
</dbReference>
<dbReference type="GenomeRNAi" id="34441"/>
<dbReference type="PRO" id="PR:Q9VKU7"/>
<dbReference type="Proteomes" id="UP000000803">
    <property type="component" value="Chromosome 2L"/>
</dbReference>
<dbReference type="Bgee" id="FBgn0026431">
    <property type="expression patterns" value="Expressed in eye disc (Drosophila) and 51 other cell types or tissues"/>
</dbReference>
<dbReference type="ExpressionAtlas" id="Q9VKU7">
    <property type="expression patterns" value="baseline and differential"/>
</dbReference>
<dbReference type="GO" id="GO:0005813">
    <property type="term" value="C:centrosome"/>
    <property type="evidence" value="ECO:0007669"/>
    <property type="project" value="UniProtKB-SubCell"/>
</dbReference>
<dbReference type="GO" id="GO:0005737">
    <property type="term" value="C:cytoplasm"/>
    <property type="evidence" value="ECO:0007669"/>
    <property type="project" value="UniProtKB-KW"/>
</dbReference>
<dbReference type="GO" id="GO:0000930">
    <property type="term" value="C:gamma-tubulin complex"/>
    <property type="evidence" value="ECO:0000318"/>
    <property type="project" value="GO_Central"/>
</dbReference>
<dbReference type="GO" id="GO:0000931">
    <property type="term" value="C:gamma-tubulin ring complex"/>
    <property type="evidence" value="ECO:0000314"/>
    <property type="project" value="FlyBase"/>
</dbReference>
<dbReference type="GO" id="GO:0005874">
    <property type="term" value="C:microtubule"/>
    <property type="evidence" value="ECO:0007669"/>
    <property type="project" value="UniProtKB-KW"/>
</dbReference>
<dbReference type="GO" id="GO:0000922">
    <property type="term" value="C:spindle pole"/>
    <property type="evidence" value="ECO:0007669"/>
    <property type="project" value="InterPro"/>
</dbReference>
<dbReference type="GO" id="GO:0043015">
    <property type="term" value="F:gamma-tubulin binding"/>
    <property type="evidence" value="ECO:0000318"/>
    <property type="project" value="GO_Central"/>
</dbReference>
<dbReference type="GO" id="GO:0005200">
    <property type="term" value="F:structural constituent of cytoskeleton"/>
    <property type="evidence" value="ECO:0000303"/>
    <property type="project" value="FlyBase"/>
</dbReference>
<dbReference type="GO" id="GO:0045450">
    <property type="term" value="P:bicoid mRNA localization"/>
    <property type="evidence" value="ECO:0000315"/>
    <property type="project" value="FlyBase"/>
</dbReference>
<dbReference type="GO" id="GO:0031122">
    <property type="term" value="P:cytoplasmic microtubule organization"/>
    <property type="evidence" value="ECO:0000318"/>
    <property type="project" value="GO_Central"/>
</dbReference>
<dbReference type="GO" id="GO:0007112">
    <property type="term" value="P:male meiosis cytokinesis"/>
    <property type="evidence" value="ECO:0000315"/>
    <property type="project" value="FlyBase"/>
</dbReference>
<dbReference type="GO" id="GO:0051321">
    <property type="term" value="P:meiotic cell cycle"/>
    <property type="evidence" value="ECO:0000318"/>
    <property type="project" value="GO_Central"/>
</dbReference>
<dbReference type="GO" id="GO:0007020">
    <property type="term" value="P:microtubule nucleation"/>
    <property type="evidence" value="ECO:0000318"/>
    <property type="project" value="GO_Central"/>
</dbReference>
<dbReference type="GO" id="GO:0000278">
    <property type="term" value="P:mitotic cell cycle"/>
    <property type="evidence" value="ECO:0000315"/>
    <property type="project" value="FlyBase"/>
</dbReference>
<dbReference type="GO" id="GO:0090221">
    <property type="term" value="P:mitotic spindle-templated microtubule nucleation"/>
    <property type="evidence" value="ECO:0000314"/>
    <property type="project" value="FlyBase"/>
</dbReference>
<dbReference type="GO" id="GO:0051225">
    <property type="term" value="P:spindle assembly"/>
    <property type="evidence" value="ECO:0000318"/>
    <property type="project" value="GO_Central"/>
</dbReference>
<dbReference type="GO" id="GO:0007058">
    <property type="term" value="P:spindle assembly involved in female meiosis II"/>
    <property type="evidence" value="ECO:0000315"/>
    <property type="project" value="FlyBase"/>
</dbReference>
<dbReference type="FunFam" id="1.20.120.1900:FF:000029">
    <property type="entry name" value="Gamma-tubulin complex component"/>
    <property type="match status" value="1"/>
</dbReference>
<dbReference type="Gene3D" id="1.20.120.1900">
    <property type="entry name" value="Gamma-tubulin complex, C-terminal domain"/>
    <property type="match status" value="1"/>
</dbReference>
<dbReference type="InterPro" id="IPR007259">
    <property type="entry name" value="GCP"/>
</dbReference>
<dbReference type="InterPro" id="IPR040457">
    <property type="entry name" value="GCP_C"/>
</dbReference>
<dbReference type="InterPro" id="IPR042241">
    <property type="entry name" value="GCP_C_sf"/>
</dbReference>
<dbReference type="InterPro" id="IPR041470">
    <property type="entry name" value="GCP_N"/>
</dbReference>
<dbReference type="PANTHER" id="PTHR19302">
    <property type="entry name" value="GAMMA TUBULIN COMPLEX PROTEIN"/>
    <property type="match status" value="1"/>
</dbReference>
<dbReference type="PANTHER" id="PTHR19302:SF27">
    <property type="entry name" value="GAMMA-TUBULIN COMPLEX COMPONENT 4"/>
    <property type="match status" value="1"/>
</dbReference>
<dbReference type="Pfam" id="PF04130">
    <property type="entry name" value="GCP_C_terminal"/>
    <property type="match status" value="1"/>
</dbReference>
<dbReference type="Pfam" id="PF17681">
    <property type="entry name" value="GCP_N_terminal"/>
    <property type="match status" value="1"/>
</dbReference>
<proteinExistence type="evidence at protein level"/>
<reference key="1">
    <citation type="journal article" date="1999" name="J. Cell Biol.">
        <title>Human 76p: a new protein member of the gamma-tubulin associated protein family.</title>
        <authorList>
            <person name="Fava F."/>
            <person name="Raynaud-Messina B."/>
            <person name="Leung-Tack J."/>
            <person name="Mazzolini L."/>
            <person name="Li M."/>
            <person name="Guillemot J.-C."/>
            <person name="Cachot D."/>
            <person name="Tollon Y."/>
            <person name="Ferrara P."/>
            <person name="Wright M."/>
        </authorList>
    </citation>
    <scope>NUCLEOTIDE SEQUENCE [MRNA]</scope>
</reference>
<reference key="2">
    <citation type="journal article" date="2000" name="Science">
        <title>The genome sequence of Drosophila melanogaster.</title>
        <authorList>
            <person name="Adams M.D."/>
            <person name="Celniker S.E."/>
            <person name="Holt R.A."/>
            <person name="Evans C.A."/>
            <person name="Gocayne J.D."/>
            <person name="Amanatides P.G."/>
            <person name="Scherer S.E."/>
            <person name="Li P.W."/>
            <person name="Hoskins R.A."/>
            <person name="Galle R.F."/>
            <person name="George R.A."/>
            <person name="Lewis S.E."/>
            <person name="Richards S."/>
            <person name="Ashburner M."/>
            <person name="Henderson S.N."/>
            <person name="Sutton G.G."/>
            <person name="Wortman J.R."/>
            <person name="Yandell M.D."/>
            <person name="Zhang Q."/>
            <person name="Chen L.X."/>
            <person name="Brandon R.C."/>
            <person name="Rogers Y.-H.C."/>
            <person name="Blazej R.G."/>
            <person name="Champe M."/>
            <person name="Pfeiffer B.D."/>
            <person name="Wan K.H."/>
            <person name="Doyle C."/>
            <person name="Baxter E.G."/>
            <person name="Helt G."/>
            <person name="Nelson C.R."/>
            <person name="Miklos G.L.G."/>
            <person name="Abril J.F."/>
            <person name="Agbayani A."/>
            <person name="An H.-J."/>
            <person name="Andrews-Pfannkoch C."/>
            <person name="Baldwin D."/>
            <person name="Ballew R.M."/>
            <person name="Basu A."/>
            <person name="Baxendale J."/>
            <person name="Bayraktaroglu L."/>
            <person name="Beasley E.M."/>
            <person name="Beeson K.Y."/>
            <person name="Benos P.V."/>
            <person name="Berman B.P."/>
            <person name="Bhandari D."/>
            <person name="Bolshakov S."/>
            <person name="Borkova D."/>
            <person name="Botchan M.R."/>
            <person name="Bouck J."/>
            <person name="Brokstein P."/>
            <person name="Brottier P."/>
            <person name="Burtis K.C."/>
            <person name="Busam D.A."/>
            <person name="Butler H."/>
            <person name="Cadieu E."/>
            <person name="Center A."/>
            <person name="Chandra I."/>
            <person name="Cherry J.M."/>
            <person name="Cawley S."/>
            <person name="Dahlke C."/>
            <person name="Davenport L.B."/>
            <person name="Davies P."/>
            <person name="de Pablos B."/>
            <person name="Delcher A."/>
            <person name="Deng Z."/>
            <person name="Mays A.D."/>
            <person name="Dew I."/>
            <person name="Dietz S.M."/>
            <person name="Dodson K."/>
            <person name="Doup L.E."/>
            <person name="Downes M."/>
            <person name="Dugan-Rocha S."/>
            <person name="Dunkov B.C."/>
            <person name="Dunn P."/>
            <person name="Durbin K.J."/>
            <person name="Evangelista C.C."/>
            <person name="Ferraz C."/>
            <person name="Ferriera S."/>
            <person name="Fleischmann W."/>
            <person name="Fosler C."/>
            <person name="Gabrielian A.E."/>
            <person name="Garg N.S."/>
            <person name="Gelbart W.M."/>
            <person name="Glasser K."/>
            <person name="Glodek A."/>
            <person name="Gong F."/>
            <person name="Gorrell J.H."/>
            <person name="Gu Z."/>
            <person name="Guan P."/>
            <person name="Harris M."/>
            <person name="Harris N.L."/>
            <person name="Harvey D.A."/>
            <person name="Heiman T.J."/>
            <person name="Hernandez J.R."/>
            <person name="Houck J."/>
            <person name="Hostin D."/>
            <person name="Houston K.A."/>
            <person name="Howland T.J."/>
            <person name="Wei M.-H."/>
            <person name="Ibegwam C."/>
            <person name="Jalali M."/>
            <person name="Kalush F."/>
            <person name="Karpen G.H."/>
            <person name="Ke Z."/>
            <person name="Kennison J.A."/>
            <person name="Ketchum K.A."/>
            <person name="Kimmel B.E."/>
            <person name="Kodira C.D."/>
            <person name="Kraft C.L."/>
            <person name="Kravitz S."/>
            <person name="Kulp D."/>
            <person name="Lai Z."/>
            <person name="Lasko P."/>
            <person name="Lei Y."/>
            <person name="Levitsky A.A."/>
            <person name="Li J.H."/>
            <person name="Li Z."/>
            <person name="Liang Y."/>
            <person name="Lin X."/>
            <person name="Liu X."/>
            <person name="Mattei B."/>
            <person name="McIntosh T.C."/>
            <person name="McLeod M.P."/>
            <person name="McPherson D."/>
            <person name="Merkulov G."/>
            <person name="Milshina N.V."/>
            <person name="Mobarry C."/>
            <person name="Morris J."/>
            <person name="Moshrefi A."/>
            <person name="Mount S.M."/>
            <person name="Moy M."/>
            <person name="Murphy B."/>
            <person name="Murphy L."/>
            <person name="Muzny D.M."/>
            <person name="Nelson D.L."/>
            <person name="Nelson D.R."/>
            <person name="Nelson K.A."/>
            <person name="Nixon K."/>
            <person name="Nusskern D.R."/>
            <person name="Pacleb J.M."/>
            <person name="Palazzolo M."/>
            <person name="Pittman G.S."/>
            <person name="Pan S."/>
            <person name="Pollard J."/>
            <person name="Puri V."/>
            <person name="Reese M.G."/>
            <person name="Reinert K."/>
            <person name="Remington K."/>
            <person name="Saunders R.D.C."/>
            <person name="Scheeler F."/>
            <person name="Shen H."/>
            <person name="Shue B.C."/>
            <person name="Siden-Kiamos I."/>
            <person name="Simpson M."/>
            <person name="Skupski M.P."/>
            <person name="Smith T.J."/>
            <person name="Spier E."/>
            <person name="Spradling A.C."/>
            <person name="Stapleton M."/>
            <person name="Strong R."/>
            <person name="Sun E."/>
            <person name="Svirskas R."/>
            <person name="Tector C."/>
            <person name="Turner R."/>
            <person name="Venter E."/>
            <person name="Wang A.H."/>
            <person name="Wang X."/>
            <person name="Wang Z.-Y."/>
            <person name="Wassarman D.A."/>
            <person name="Weinstock G.M."/>
            <person name="Weissenbach J."/>
            <person name="Williams S.M."/>
            <person name="Woodage T."/>
            <person name="Worley K.C."/>
            <person name="Wu D."/>
            <person name="Yang S."/>
            <person name="Yao Q.A."/>
            <person name="Ye J."/>
            <person name="Yeh R.-F."/>
            <person name="Zaveri J.S."/>
            <person name="Zhan M."/>
            <person name="Zhang G."/>
            <person name="Zhao Q."/>
            <person name="Zheng L."/>
            <person name="Zheng X.H."/>
            <person name="Zhong F.N."/>
            <person name="Zhong W."/>
            <person name="Zhou X."/>
            <person name="Zhu S.C."/>
            <person name="Zhu X."/>
            <person name="Smith H.O."/>
            <person name="Gibbs R.A."/>
            <person name="Myers E.W."/>
            <person name="Rubin G.M."/>
            <person name="Venter J.C."/>
        </authorList>
    </citation>
    <scope>NUCLEOTIDE SEQUENCE [LARGE SCALE GENOMIC DNA]</scope>
    <source>
        <strain>Berkeley</strain>
    </source>
</reference>
<reference key="3">
    <citation type="journal article" date="2002" name="Genome Biol.">
        <title>Annotation of the Drosophila melanogaster euchromatic genome: a systematic review.</title>
        <authorList>
            <person name="Misra S."/>
            <person name="Crosby M.A."/>
            <person name="Mungall C.J."/>
            <person name="Matthews B.B."/>
            <person name="Campbell K.S."/>
            <person name="Hradecky P."/>
            <person name="Huang Y."/>
            <person name="Kaminker J.S."/>
            <person name="Millburn G.H."/>
            <person name="Prochnik S.E."/>
            <person name="Smith C.D."/>
            <person name="Tupy J.L."/>
            <person name="Whitfield E.J."/>
            <person name="Bayraktaroglu L."/>
            <person name="Berman B.P."/>
            <person name="Bettencourt B.R."/>
            <person name="Celniker S.E."/>
            <person name="de Grey A.D.N.J."/>
            <person name="Drysdale R.A."/>
            <person name="Harris N.L."/>
            <person name="Richter J."/>
            <person name="Russo S."/>
            <person name="Schroeder A.J."/>
            <person name="Shu S.Q."/>
            <person name="Stapleton M."/>
            <person name="Yamada C."/>
            <person name="Ashburner M."/>
            <person name="Gelbart W.M."/>
            <person name="Rubin G.M."/>
            <person name="Lewis S.E."/>
        </authorList>
    </citation>
    <scope>GENOME REANNOTATION</scope>
    <source>
        <strain>Berkeley</strain>
    </source>
</reference>
<reference key="4">
    <citation type="journal article" date="2008" name="J. Proteome Res.">
        <title>Phosphoproteome analysis of Drosophila melanogaster embryos.</title>
        <authorList>
            <person name="Zhai B."/>
            <person name="Villen J."/>
            <person name="Beausoleil S.A."/>
            <person name="Mintseris J."/>
            <person name="Gygi S.P."/>
        </authorList>
    </citation>
    <scope>PHOSPHORYLATION [LARGE SCALE ANALYSIS] AT SER-214; THR-216 AND SER-218</scope>
    <scope>IDENTIFICATION BY MASS SPECTROMETRY</scope>
    <source>
        <tissue>Embryo</tissue>
    </source>
</reference>
<organism>
    <name type="scientific">Drosophila melanogaster</name>
    <name type="common">Fruit fly</name>
    <dbReference type="NCBI Taxonomy" id="7227"/>
    <lineage>
        <taxon>Eukaryota</taxon>
        <taxon>Metazoa</taxon>
        <taxon>Ecdysozoa</taxon>
        <taxon>Arthropoda</taxon>
        <taxon>Hexapoda</taxon>
        <taxon>Insecta</taxon>
        <taxon>Pterygota</taxon>
        <taxon>Neoptera</taxon>
        <taxon>Endopterygota</taxon>
        <taxon>Diptera</taxon>
        <taxon>Brachycera</taxon>
        <taxon>Muscomorpha</taxon>
        <taxon>Ephydroidea</taxon>
        <taxon>Drosophilidae</taxon>
        <taxon>Drosophila</taxon>
        <taxon>Sophophora</taxon>
    </lineage>
</organism>
<gene>
    <name type="primary">Grip75</name>
    <name type="synonym">75p</name>
    <name type="ORF">CG6176</name>
</gene>
<comment type="function">
    <text evidence="1">Gamma-tubulin complex is necessary for microtubule nucleation at the centrosome.</text>
</comment>
<comment type="subcellular location">
    <subcellularLocation>
        <location evidence="3">Cytoplasm</location>
        <location evidence="3">Cytoskeleton</location>
        <location evidence="3">Microtubule organizing center</location>
        <location evidence="3">Centrosome</location>
    </subcellularLocation>
</comment>
<comment type="similarity">
    <text evidence="3">Belongs to the TUBGCP family.</text>
</comment>
<feature type="chain" id="PRO_0000078126" description="Gamma-tubulin complex component 4 homolog">
    <location>
        <begin position="1"/>
        <end position="650"/>
    </location>
</feature>
<feature type="modified residue" description="Phosphoserine" evidence="2">
    <location>
        <position position="214"/>
    </location>
</feature>
<feature type="modified residue" description="Phosphothreonine" evidence="2">
    <location>
        <position position="216"/>
    </location>
</feature>
<feature type="modified residue" description="Phosphoserine" evidence="2">
    <location>
        <position position="218"/>
    </location>
</feature>
<accession>Q9VKU7</accession>
<accession>Q9U1J7</accession>
<evidence type="ECO:0000250" key="1"/>
<evidence type="ECO:0000269" key="2">
    <source>
    </source>
</evidence>
<evidence type="ECO:0000305" key="3"/>
<sequence length="650" mass="74980">MIHDLLLACRSHNPEQLGIKAFNETTVIDQFIHPCEREIFMDIIKIIKVYQEVEQFTHSSGRKSDTHGELPDSLHGYYLLNLAKGIEMALEEYYAEIGRLEKYCLGNERNSLSYVYNALYAKFPLLVFMRNLITEIHVLNLRGCVLLHNLHQQCEHGDIQLEKAIKIIMKPVKNAFFSSLAHWLLFGVIDDVHSEFFIKFTPTDAVDGSSFSKSATCSLLSAEKNPEDYIWQYEVNMSQLPGFFSIVLAEKVLFVGQTVLVFKMGRNVKVKNKTDPLAAKLAELDSDDIYQLWSGRESEFFKMVVDLSNEDTINVFRLEKVIIDIKNYVSARLSEIAVNEVDLERQMGLIKDFFLLGRGEFYLEFCSQMVGTMETYREERFKNVTRSFELAATVTGITDDLDKFSLICQRSTSEPDDTSDFNFLQGLSLKYEYEWPLNLLFSPTTIERYNNIFRFLLIIRTYQYEIQRVWAKQTWRAKSAKDVPPNNKIITLRNYLMFFLNNMQYYIQVDVLESQFGILMNVIKSRSDFEVIQRAHTVFLANVLSHCFLLNESETQLNVTGSQNRNPIYGTLLKLFGICEKFAHMTQTKDPSDDLEDEVDQLNESFGVQIASLIQLLVDVKSASCLGPLSQLLLRLDFNCWFSASHNTSA</sequence>